<name>CY1_NEUCR</name>
<proteinExistence type="evidence at protein level"/>
<organism>
    <name type="scientific">Neurospora crassa (strain ATCC 24698 / 74-OR23-1A / CBS 708.71 / DSM 1257 / FGSC 987)</name>
    <dbReference type="NCBI Taxonomy" id="367110"/>
    <lineage>
        <taxon>Eukaryota</taxon>
        <taxon>Fungi</taxon>
        <taxon>Dikarya</taxon>
        <taxon>Ascomycota</taxon>
        <taxon>Pezizomycotina</taxon>
        <taxon>Sordariomycetes</taxon>
        <taxon>Sordariomycetidae</taxon>
        <taxon>Sordariales</taxon>
        <taxon>Sordariaceae</taxon>
        <taxon>Neurospora</taxon>
    </lineage>
</organism>
<dbReference type="EC" id="7.1.1.8" evidence="7 10"/>
<dbReference type="EMBL" id="X05235">
    <property type="protein sequence ID" value="CAA28860.1"/>
    <property type="molecule type" value="mRNA"/>
</dbReference>
<dbReference type="EMBL" id="CM002236">
    <property type="protein sequence ID" value="EAA34520.1"/>
    <property type="status" value="ALT_FRAME"/>
    <property type="molecule type" value="Genomic_DNA"/>
</dbReference>
<dbReference type="PIR" id="A27187">
    <property type="entry name" value="A27187"/>
</dbReference>
<dbReference type="SMR" id="P07142"/>
<dbReference type="FunCoup" id="P07142">
    <property type="interactions" value="669"/>
</dbReference>
<dbReference type="STRING" id="367110.P07142"/>
<dbReference type="PaxDb" id="5141-EFNCRP00000009558"/>
<dbReference type="EnsemblFungi" id="EAA34520">
    <property type="protein sequence ID" value="EAA34520"/>
    <property type="gene ID" value="NCU09816"/>
</dbReference>
<dbReference type="KEGG" id="ncr:NCU09816"/>
<dbReference type="HOGENOM" id="CLU_040334_1_1_1"/>
<dbReference type="InParanoid" id="P07142"/>
<dbReference type="OrthoDB" id="5925at2759"/>
<dbReference type="Proteomes" id="UP000001805">
    <property type="component" value="Chromosome 1, Linkage Group I"/>
</dbReference>
<dbReference type="GO" id="GO:0005743">
    <property type="term" value="C:mitochondrial inner membrane"/>
    <property type="evidence" value="ECO:0007669"/>
    <property type="project" value="UniProtKB-SubCell"/>
</dbReference>
<dbReference type="GO" id="GO:0045275">
    <property type="term" value="C:respiratory chain complex III"/>
    <property type="evidence" value="ECO:0000318"/>
    <property type="project" value="GO_Central"/>
</dbReference>
<dbReference type="GO" id="GO:0020037">
    <property type="term" value="F:heme binding"/>
    <property type="evidence" value="ECO:0007669"/>
    <property type="project" value="InterPro"/>
</dbReference>
<dbReference type="GO" id="GO:0046872">
    <property type="term" value="F:metal ion binding"/>
    <property type="evidence" value="ECO:0007669"/>
    <property type="project" value="UniProtKB-KW"/>
</dbReference>
<dbReference type="GO" id="GO:0008121">
    <property type="term" value="F:ubiquinol-cytochrome-c reductase activity"/>
    <property type="evidence" value="ECO:0007669"/>
    <property type="project" value="UniProtKB-EC"/>
</dbReference>
<dbReference type="GO" id="GO:0006122">
    <property type="term" value="P:mitochondrial electron transport, ubiquinol to cytochrome c"/>
    <property type="evidence" value="ECO:0000318"/>
    <property type="project" value="GO_Central"/>
</dbReference>
<dbReference type="FunFam" id="1.10.760.10:FF:000002">
    <property type="entry name" value="Cytochrome c1, heme protein"/>
    <property type="match status" value="1"/>
</dbReference>
<dbReference type="FunFam" id="1.20.5.100:FF:000003">
    <property type="entry name" value="Cytochrome c1, heme protein, mitochondrial"/>
    <property type="match status" value="1"/>
</dbReference>
<dbReference type="Gene3D" id="1.10.760.10">
    <property type="entry name" value="Cytochrome c-like domain"/>
    <property type="match status" value="1"/>
</dbReference>
<dbReference type="Gene3D" id="1.20.5.100">
    <property type="entry name" value="Cytochrome c1, transmembrane anchor, C-terminal"/>
    <property type="match status" value="1"/>
</dbReference>
<dbReference type="InterPro" id="IPR009056">
    <property type="entry name" value="Cyt_c-like_dom"/>
</dbReference>
<dbReference type="InterPro" id="IPR036909">
    <property type="entry name" value="Cyt_c-like_dom_sf"/>
</dbReference>
<dbReference type="InterPro" id="IPR002326">
    <property type="entry name" value="Cyt_c1"/>
</dbReference>
<dbReference type="InterPro" id="IPR021157">
    <property type="entry name" value="Cyt_c1_TM_anchor_C"/>
</dbReference>
<dbReference type="PANTHER" id="PTHR10266">
    <property type="entry name" value="CYTOCHROME C1"/>
    <property type="match status" value="1"/>
</dbReference>
<dbReference type="PANTHER" id="PTHR10266:SF3">
    <property type="entry name" value="CYTOCHROME C1, HEME PROTEIN, MITOCHONDRIAL"/>
    <property type="match status" value="1"/>
</dbReference>
<dbReference type="Pfam" id="PF02167">
    <property type="entry name" value="Cytochrom_C1"/>
    <property type="match status" value="1"/>
</dbReference>
<dbReference type="PRINTS" id="PR00603">
    <property type="entry name" value="CYTOCHROMEC1"/>
</dbReference>
<dbReference type="SUPFAM" id="SSF46626">
    <property type="entry name" value="Cytochrome c"/>
    <property type="match status" value="1"/>
</dbReference>
<dbReference type="SUPFAM" id="SSF81496">
    <property type="entry name" value="Cytochrome c1 subunit of cytochrome bc1 complex (Ubiquinol-cytochrome c reductase), transmembrane anchor"/>
    <property type="match status" value="1"/>
</dbReference>
<dbReference type="PROSITE" id="PS51007">
    <property type="entry name" value="CYTC"/>
    <property type="match status" value="1"/>
</dbReference>
<sequence>MLARTCLRSTRTFASAKNGAFKFAKRSASTQSSGAAAESPLRLNIAAAAATAVAAGSIAWYYHLYGFASAMTPAEEGLHATKYPWVHEQWLKTFDHQALRRGFQVYREVCASCHSLSRVPYRALVGTILTVDEAKALAEENEYDTEPNDQGEIEKRPGKLSDYLPDPYKNDEAARFANNGALPPDLSLIVKARHGGCDYIFSLLTGYPDEPPAGASVGAGLNFNPYFPGTGIAMARVLYDGLVDYEDGTPASTSQMAKDVVEFLNWAAEPEMDDRKRMGMKVLVVTSVLFALSVYVKRYKWAWLKSRKIVYDPPKSPPPATNLALPQQRAKS</sequence>
<feature type="transit peptide" description="Mitochondrion" evidence="13">
    <location>
        <begin position="1"/>
        <end position="70"/>
    </location>
</feature>
<feature type="chain" id="PRO_0000006556" description="Cytochrome c1, heme protein, mitochondrial">
    <location>
        <begin position="71"/>
        <end position="332"/>
    </location>
</feature>
<feature type="topological domain" description="Mitochondrial intermembrane" evidence="1">
    <location>
        <begin position="71"/>
        <end position="277"/>
    </location>
</feature>
<feature type="transmembrane region" description="Helical" evidence="2">
    <location>
        <begin position="278"/>
        <end position="296"/>
    </location>
</feature>
<feature type="topological domain" description="Mitochondrial matrix" evidence="1">
    <location>
        <begin position="297"/>
        <end position="332"/>
    </location>
</feature>
<feature type="domain" description="Cytochrome c" evidence="3">
    <location>
        <begin position="97"/>
        <end position="250"/>
    </location>
</feature>
<feature type="region of interest" description="Disordered" evidence="4">
    <location>
        <begin position="139"/>
        <end position="162"/>
    </location>
</feature>
<feature type="compositionally biased region" description="Acidic residues" evidence="4">
    <location>
        <begin position="139"/>
        <end position="151"/>
    </location>
</feature>
<feature type="binding site" description="covalent" evidence="1">
    <location>
        <position position="110"/>
    </location>
    <ligand>
        <name>heme c</name>
        <dbReference type="ChEBI" id="CHEBI:61717"/>
    </ligand>
</feature>
<feature type="binding site" description="covalent" evidence="1">
    <location>
        <position position="113"/>
    </location>
    <ligand>
        <name>heme c</name>
        <dbReference type="ChEBI" id="CHEBI:61717"/>
    </ligand>
</feature>
<feature type="binding site" description="axial binding residue" evidence="1">
    <location>
        <position position="114"/>
    </location>
    <ligand>
        <name>heme c</name>
        <dbReference type="ChEBI" id="CHEBI:61717"/>
    </ligand>
    <ligandPart>
        <name>Fe</name>
        <dbReference type="ChEBI" id="CHEBI:18248"/>
    </ligandPart>
</feature>
<feature type="binding site" description="axial binding residue" evidence="1">
    <location>
        <position position="234"/>
    </location>
    <ligand>
        <name>heme c</name>
        <dbReference type="ChEBI" id="CHEBI:61717"/>
    </ligand>
    <ligandPart>
        <name>Fe</name>
        <dbReference type="ChEBI" id="CHEBI:18248"/>
    </ligandPart>
</feature>
<evidence type="ECO:0000250" key="1">
    <source>
        <dbReference type="UniProtKB" id="P07143"/>
    </source>
</evidence>
<evidence type="ECO:0000255" key="2"/>
<evidence type="ECO:0000255" key="3">
    <source>
        <dbReference type="PROSITE-ProRule" id="PRU00433"/>
    </source>
</evidence>
<evidence type="ECO:0000256" key="4">
    <source>
        <dbReference type="SAM" id="MobiDB-lite"/>
    </source>
</evidence>
<evidence type="ECO:0000269" key="5">
    <source>
    </source>
</evidence>
<evidence type="ECO:0000269" key="6">
    <source>
    </source>
</evidence>
<evidence type="ECO:0000269" key="7">
    <source>
    </source>
</evidence>
<evidence type="ECO:0000269" key="8">
    <source>
    </source>
</evidence>
<evidence type="ECO:0000269" key="9">
    <source>
    </source>
</evidence>
<evidence type="ECO:0000269" key="10">
    <source>
    </source>
</evidence>
<evidence type="ECO:0000269" key="11">
    <source>
    </source>
</evidence>
<evidence type="ECO:0000269" key="12">
    <source>
    </source>
</evidence>
<evidence type="ECO:0000269" key="13">
    <source ref="3"/>
</evidence>
<evidence type="ECO:0000303" key="14">
    <source>
    </source>
</evidence>
<evidence type="ECO:0000305" key="15"/>
<evidence type="ECO:0000305" key="16">
    <source>
    </source>
</evidence>
<evidence type="ECO:0000305" key="17">
    <source>
    </source>
</evidence>
<accession>P07142</accession>
<accession>Q7SCQ1</accession>
<comment type="function">
    <text evidence="1 10 16 17">Component of the ubiquinol-cytochrome c oxidoreductase, a multisubunit transmembrane complex that is part of the mitochondrial electron transport chain which drives oxidative phosphorylation. The respiratory chain contains 3 multisubunit complexes succinate dehydrogenase (complex II, CII), ubiquinol-cytochrome c oxidoreductase (cytochrome b-c1 complex, complex III, CIII) and cytochrome c oxidase (complex IV, CIV), that cooperate to transfer electrons derived from NADH and succinate to molecular oxygen, creating an electrochemical gradient over the inner membrane that drives transmembrane transport and the ATP synthase. The cytochrome b-c1 complex catalyzes electron transfer from ubiquinol to cytochrome c, linking this redox reaction to translocation of protons across the mitochondrial inner membrane, with protons being carried across the membrane as hydrogens on the quinol. In the process called Q cycle, 2 protons are consumed from the matrix, 4 protons are released into the intermembrane space and 2 electrons are passed to cytochrome c (Probable) (PubMed:3015618). Cytochrome c1 is a catalytic core subunit containing a c-type heme. It transfers electrons from the [2Fe-2S] iron-sulfur cluster of the Rieske protein to cytochrome c (By similarity).</text>
</comment>
<comment type="catalytic activity">
    <reaction evidence="7 10">
        <text>a quinol + 2 Fe(III)-[cytochrome c](out) = a quinone + 2 Fe(II)-[cytochrome c](out) + 2 H(+)(out)</text>
        <dbReference type="Rhea" id="RHEA:11484"/>
        <dbReference type="Rhea" id="RHEA-COMP:10350"/>
        <dbReference type="Rhea" id="RHEA-COMP:14399"/>
        <dbReference type="ChEBI" id="CHEBI:15378"/>
        <dbReference type="ChEBI" id="CHEBI:24646"/>
        <dbReference type="ChEBI" id="CHEBI:29033"/>
        <dbReference type="ChEBI" id="CHEBI:29034"/>
        <dbReference type="ChEBI" id="CHEBI:132124"/>
        <dbReference type="EC" id="7.1.1.8"/>
    </reaction>
</comment>
<comment type="cofactor">
    <cofactor evidence="1">
        <name>heme c</name>
        <dbReference type="ChEBI" id="CHEBI:61717"/>
    </cofactor>
    <text evidence="1">Binds 1 heme c group covalently per subunit.</text>
</comment>
<comment type="subunit">
    <text evidence="5 6 8 9 11 12">Component of the ubiquinol-cytochrome c oxidoreductase (cytochrome b-c1 complex, complex III, CIII), a multisubunit enzyme composed of 10 subunits. The complex is composed of 3 respiratory subunits cytochrome b (cob), cytochrome c1 (cyt-1) and Rieske protein (fes-1), 2 core protein subunits pep and ucr-1, and 5 low-molecular weight protein subunits qcr6, qcr7, qcr8, qcr9 and probably NCU16844/qcr10 (PubMed:18251112, PubMed:226365, PubMed:6273583, PubMed:6302289). The complex exists as an obligatory dimer and forms supercomplexes (SCs) in the inner mitochondrial membrane with NADH-ubiquinone oxidoreductase (complex I, CI) and cytochrome c oxidase (complex IV, CIV), resulting in different assemblies (supercomplexes SCI(1)III(2), SCIII(2)IV(1) and SCIII(2)IV(2) as well as higher order I(x)III(y)IV(z) megacomplexes) (PubMed:17873079, PubMed:19239619).</text>
</comment>
<comment type="subcellular location">
    <subcellularLocation>
        <location evidence="9">Mitochondrion inner membrane</location>
        <topology evidence="1">Single-pass membrane protein</topology>
    </subcellularLocation>
</comment>
<comment type="similarity">
    <text evidence="15">Belongs to the cytochrome c family.</text>
</comment>
<comment type="sequence caution" evidence="15">
    <conflict type="frameshift">
        <sequence resource="EMBL-CDS" id="EAA34520"/>
    </conflict>
</comment>
<keyword id="KW-0903">Direct protein sequencing</keyword>
<keyword id="KW-0249">Electron transport</keyword>
<keyword id="KW-0349">Heme</keyword>
<keyword id="KW-0408">Iron</keyword>
<keyword id="KW-0472">Membrane</keyword>
<keyword id="KW-0479">Metal-binding</keyword>
<keyword id="KW-0496">Mitochondrion</keyword>
<keyword id="KW-0999">Mitochondrion inner membrane</keyword>
<keyword id="KW-1185">Reference proteome</keyword>
<keyword id="KW-0679">Respiratory chain</keyword>
<keyword id="KW-0809">Transit peptide</keyword>
<keyword id="KW-1278">Translocase</keyword>
<keyword id="KW-0812">Transmembrane</keyword>
<keyword id="KW-1133">Transmembrane helix</keyword>
<keyword id="KW-0813">Transport</keyword>
<protein>
    <recommendedName>
        <fullName>Cytochrome c1, heme protein, mitochondrial</fullName>
        <ecNumber evidence="7 10">7.1.1.8</ecNumber>
    </recommendedName>
    <alternativeName>
        <fullName>Complex III subunit 4</fullName>
    </alternativeName>
    <alternativeName>
        <fullName evidence="14">Complex III subunit IV</fullName>
    </alternativeName>
    <alternativeName>
        <fullName>Cytochrome b-c1 complex subunit 4</fullName>
    </alternativeName>
    <alternativeName>
        <fullName>Ubiquinol-cytochrome c oxidoreductase complex cytochrome c1 subunit</fullName>
        <shortName>Cytochrome c-1</shortName>
    </alternativeName>
    <alternativeName>
        <fullName>Ubiquinol-cytochrome c reductase complex 31 kDa protein</fullName>
    </alternativeName>
</protein>
<gene>
    <name type="primary">cyt-1</name>
    <name type="ORF">NCU09816</name>
</gene>
<reference key="1">
    <citation type="journal article" date="1987" name="Eur. J. Biochem.">
        <title>The primary structure of cytochrome c1 from Neurospora crassa.</title>
        <authorList>
            <person name="Roemisch J."/>
            <person name="Tropschug M."/>
            <person name="Sebald W."/>
            <person name="Weiss H."/>
        </authorList>
    </citation>
    <scope>NUCLEOTIDE SEQUENCE [MRNA]</scope>
</reference>
<reference key="2">
    <citation type="journal article" date="2003" name="Nature">
        <title>The genome sequence of the filamentous fungus Neurospora crassa.</title>
        <authorList>
            <person name="Galagan J.E."/>
            <person name="Calvo S.E."/>
            <person name="Borkovich K.A."/>
            <person name="Selker E.U."/>
            <person name="Read N.D."/>
            <person name="Jaffe D.B."/>
            <person name="FitzHugh W."/>
            <person name="Ma L.-J."/>
            <person name="Smirnov S."/>
            <person name="Purcell S."/>
            <person name="Rehman B."/>
            <person name="Elkins T."/>
            <person name="Engels R."/>
            <person name="Wang S."/>
            <person name="Nielsen C.B."/>
            <person name="Butler J."/>
            <person name="Endrizzi M."/>
            <person name="Qui D."/>
            <person name="Ianakiev P."/>
            <person name="Bell-Pedersen D."/>
            <person name="Nelson M.A."/>
            <person name="Werner-Washburne M."/>
            <person name="Selitrennikoff C.P."/>
            <person name="Kinsey J.A."/>
            <person name="Braun E.L."/>
            <person name="Zelter A."/>
            <person name="Schulte U."/>
            <person name="Kothe G.O."/>
            <person name="Jedd G."/>
            <person name="Mewes H.-W."/>
            <person name="Staben C."/>
            <person name="Marcotte E."/>
            <person name="Greenberg D."/>
            <person name="Roy A."/>
            <person name="Foley K."/>
            <person name="Naylor J."/>
            <person name="Stange-Thomann N."/>
            <person name="Barrett R."/>
            <person name="Gnerre S."/>
            <person name="Kamal M."/>
            <person name="Kamvysselis M."/>
            <person name="Mauceli E.W."/>
            <person name="Bielke C."/>
            <person name="Rudd S."/>
            <person name="Frishman D."/>
            <person name="Krystofova S."/>
            <person name="Rasmussen C."/>
            <person name="Metzenberg R.L."/>
            <person name="Perkins D.D."/>
            <person name="Kroken S."/>
            <person name="Cogoni C."/>
            <person name="Macino G."/>
            <person name="Catcheside D.E.A."/>
            <person name="Li W."/>
            <person name="Pratt R.J."/>
            <person name="Osmani S.A."/>
            <person name="DeSouza C.P.C."/>
            <person name="Glass N.L."/>
            <person name="Orbach M.J."/>
            <person name="Berglund J.A."/>
            <person name="Voelker R."/>
            <person name="Yarden O."/>
            <person name="Plamann M."/>
            <person name="Seiler S."/>
            <person name="Dunlap J.C."/>
            <person name="Radford A."/>
            <person name="Aramayo R."/>
            <person name="Natvig D.O."/>
            <person name="Alex L.A."/>
            <person name="Mannhaupt G."/>
            <person name="Ebbole D.J."/>
            <person name="Freitag M."/>
            <person name="Paulsen I."/>
            <person name="Sachs M.S."/>
            <person name="Lander E.S."/>
            <person name="Nusbaum C."/>
            <person name="Birren B.W."/>
        </authorList>
    </citation>
    <scope>NUCLEOTIDE SEQUENCE [LARGE SCALE GENOMIC DNA]</scope>
    <source>
        <strain>ATCC 24698 / 74-OR23-1A / CBS 708.71 / DSM 1257 / FGSC 987</strain>
    </source>
</reference>
<reference key="3">
    <citation type="book" date="1979" name="Cytochrome oxidase">
        <editorList>
            <person name="King T.E."/>
            <person name="Ovii Y."/>
            <person name="Chance B."/>
            <person name="Okonuki K."/>
        </editorList>
        <authorList>
            <person name="Tsugita A."/>
            <person name="Gregor J."/>
            <person name="Kubota J."/>
            <person name="Van der Broek R."/>
        </authorList>
    </citation>
    <scope>PROTEIN SEQUENCE OF N-TERMINUS</scope>
</reference>
<reference key="4">
    <citation type="journal article" date="1979" name="Eur. J. Biochem.">
        <title>Isolation of mitochondrial succinate: ubiquinone reductase, cytochrome c reductase and cytochrome c oxidase from Neurospora crassa using nonionic detergent.</title>
        <authorList>
            <person name="Weiss H."/>
            <person name="Kolb H.J."/>
        </authorList>
    </citation>
    <scope>SUBUNIT</scope>
    <scope>SUBCELLULAR LOCATION</scope>
</reference>
<reference key="5">
    <citation type="journal article" date="1981" name="J. Mol. Biol.">
        <title>Three-dimensional structure of ubiquinol:cytochrome c reductase from Neurospora mitochondria determined by electron microscopy of membrane crystals.</title>
        <authorList>
            <person name="Leonard K."/>
            <person name="Wingfield P."/>
            <person name="Arad T."/>
            <person name="Weiss H."/>
        </authorList>
    </citation>
    <scope>SUBUNIT</scope>
</reference>
<reference key="6">
    <citation type="journal article" date="1983" name="J. Bioenerg. Biomembr.">
        <title>Comparative study of the peptide composition of Complex III (quinol-cytochrome c reductase).</title>
        <authorList>
            <person name="Mendel-Hartvig I."/>
            <person name="Nelson B.D."/>
        </authorList>
    </citation>
    <scope>SUBUNIT</scope>
</reference>
<reference key="7">
    <citation type="journal article" date="1983" name="J. Mol. Biol.">
        <title>Structural studies of cytochrome reductase. Subunit topography determined by electron microscopy of membrane crystals of a subcomplex.</title>
        <authorList>
            <person name="Karlsson B."/>
            <person name="Hovmoeller S."/>
            <person name="Weiss H."/>
            <person name="Leonard K."/>
        </authorList>
    </citation>
    <scope>SUBUNIT</scope>
</reference>
<reference key="8">
    <citation type="journal article" date="1986" name="Eur. J. Biochem.">
        <title>Dimeric ubiquinol:cytochrome c reductase of Neurospora mitochondria contains one cooperative ubiquinone-reduction centre.</title>
        <authorList>
            <person name="Linke P."/>
            <person name="Bechmann G."/>
            <person name="Gothe A."/>
            <person name="Weiss H."/>
        </authorList>
    </citation>
    <scope>FUNCTION OF COMPLEX III</scope>
</reference>
<reference key="9">
    <citation type="journal article" date="1991" name="Eur. J. Biochem.">
        <title>Regulation of the proton/electron stoichiometry of mitochondrial ubiquinol:cytochrome c reductase by the membrane potential.</title>
        <authorList>
            <person name="Bechmann G."/>
            <person name="Weiss H."/>
        </authorList>
    </citation>
    <scope>FUNCTION OF COMPLEX III</scope>
</reference>
<reference key="10">
    <citation type="journal article" date="2007" name="Eukaryot. Cell">
        <title>Supramolecular organization of the respiratory chain in Neurospora crassa mitochondria.</title>
        <authorList>
            <person name="Marques I."/>
            <person name="Dencher N.A."/>
            <person name="Videira A."/>
            <person name="Krause F."/>
        </authorList>
    </citation>
    <scope>COMPOSITION OF THE RESPIRATORY COMPLEX III</scope>
    <scope>IDENTIFICATION BY MASS SPECTROMETRY</scope>
</reference>
<reference key="11">
    <citation type="journal article" date="2009" name="Mol. Microbiol.">
        <title>Effects of mitochondrial complex III disruption in the respiratory chain of Neurospora crassa.</title>
        <authorList>
            <person name="Duarte M."/>
            <person name="Videira A."/>
        </authorList>
    </citation>
    <scope>FUNCTION OF COMPLEX III</scope>
    <scope>SUBUNIT</scope>
</reference>